<protein>
    <recommendedName>
        <fullName evidence="1">ATP synthase gamma chain</fullName>
    </recommendedName>
    <alternativeName>
        <fullName evidence="1">ATP synthase F1 sector gamma subunit</fullName>
    </alternativeName>
    <alternativeName>
        <fullName evidence="1">F-ATPase gamma subunit</fullName>
    </alternativeName>
</protein>
<reference key="1">
    <citation type="journal article" date="2004" name="Proc. Natl. Acad. Sci. U.S.A.">
        <title>The louse-borne human pathogen Bartonella quintana is a genomic derivative of the zoonotic agent Bartonella henselae.</title>
        <authorList>
            <person name="Alsmark U.C.M."/>
            <person name="Frank A.C."/>
            <person name="Karlberg E.O."/>
            <person name="Legault B.-A."/>
            <person name="Ardell D.H."/>
            <person name="Canbaeck B."/>
            <person name="Eriksson A.-S."/>
            <person name="Naeslund A.K."/>
            <person name="Handley S.A."/>
            <person name="Huvet M."/>
            <person name="La Scola B."/>
            <person name="Holmberg M."/>
            <person name="Andersson S.G.E."/>
        </authorList>
    </citation>
    <scope>NUCLEOTIDE SEQUENCE [LARGE SCALE GENOMIC DNA]</scope>
    <source>
        <strain>ATCC 49882 / DSM 28221 / CCUG 30454 / Houston 1</strain>
    </source>
</reference>
<keyword id="KW-0066">ATP synthesis</keyword>
<keyword id="KW-0997">Cell inner membrane</keyword>
<keyword id="KW-1003">Cell membrane</keyword>
<keyword id="KW-0139">CF(1)</keyword>
<keyword id="KW-0375">Hydrogen ion transport</keyword>
<keyword id="KW-0406">Ion transport</keyword>
<keyword id="KW-0472">Membrane</keyword>
<keyword id="KW-0813">Transport</keyword>
<name>ATPG_BARHE</name>
<dbReference type="EMBL" id="BX897699">
    <property type="protein sequence ID" value="CAF28296.1"/>
    <property type="molecule type" value="Genomic_DNA"/>
</dbReference>
<dbReference type="RefSeq" id="WP_011181299.1">
    <property type="nucleotide sequence ID" value="NZ_LRIJ02000001.1"/>
</dbReference>
<dbReference type="SMR" id="Q6G1W8"/>
<dbReference type="PaxDb" id="283166-BH15330"/>
<dbReference type="EnsemblBacteria" id="CAF28296">
    <property type="protein sequence ID" value="CAF28296"/>
    <property type="gene ID" value="BH15330"/>
</dbReference>
<dbReference type="KEGG" id="bhe:BH15330"/>
<dbReference type="eggNOG" id="COG0224">
    <property type="taxonomic scope" value="Bacteria"/>
</dbReference>
<dbReference type="OrthoDB" id="9812769at2"/>
<dbReference type="Proteomes" id="UP000000421">
    <property type="component" value="Chromosome"/>
</dbReference>
<dbReference type="GO" id="GO:0005886">
    <property type="term" value="C:plasma membrane"/>
    <property type="evidence" value="ECO:0007669"/>
    <property type="project" value="UniProtKB-SubCell"/>
</dbReference>
<dbReference type="GO" id="GO:0045259">
    <property type="term" value="C:proton-transporting ATP synthase complex"/>
    <property type="evidence" value="ECO:0007669"/>
    <property type="project" value="UniProtKB-KW"/>
</dbReference>
<dbReference type="GO" id="GO:0005524">
    <property type="term" value="F:ATP binding"/>
    <property type="evidence" value="ECO:0007669"/>
    <property type="project" value="UniProtKB-UniRule"/>
</dbReference>
<dbReference type="GO" id="GO:0046933">
    <property type="term" value="F:proton-transporting ATP synthase activity, rotational mechanism"/>
    <property type="evidence" value="ECO:0007669"/>
    <property type="project" value="UniProtKB-UniRule"/>
</dbReference>
<dbReference type="GO" id="GO:0042777">
    <property type="term" value="P:proton motive force-driven plasma membrane ATP synthesis"/>
    <property type="evidence" value="ECO:0007669"/>
    <property type="project" value="UniProtKB-UniRule"/>
</dbReference>
<dbReference type="CDD" id="cd12151">
    <property type="entry name" value="F1-ATPase_gamma"/>
    <property type="match status" value="1"/>
</dbReference>
<dbReference type="FunFam" id="1.10.287.80:FF:000001">
    <property type="entry name" value="ATP synthase gamma chain"/>
    <property type="match status" value="1"/>
</dbReference>
<dbReference type="FunFam" id="1.10.287.80:FF:000003">
    <property type="entry name" value="ATP synthase gamma chain, chloroplastic"/>
    <property type="match status" value="1"/>
</dbReference>
<dbReference type="Gene3D" id="3.40.1380.10">
    <property type="match status" value="1"/>
</dbReference>
<dbReference type="Gene3D" id="1.10.287.80">
    <property type="entry name" value="ATP synthase, gamma subunit, helix hairpin domain"/>
    <property type="match status" value="1"/>
</dbReference>
<dbReference type="HAMAP" id="MF_00815">
    <property type="entry name" value="ATP_synth_gamma_bact"/>
    <property type="match status" value="1"/>
</dbReference>
<dbReference type="InterPro" id="IPR035968">
    <property type="entry name" value="ATP_synth_F1_ATPase_gsu"/>
</dbReference>
<dbReference type="InterPro" id="IPR000131">
    <property type="entry name" value="ATP_synth_F1_gsu"/>
</dbReference>
<dbReference type="InterPro" id="IPR023632">
    <property type="entry name" value="ATP_synth_F1_gsu_CS"/>
</dbReference>
<dbReference type="NCBIfam" id="TIGR01146">
    <property type="entry name" value="ATPsyn_F1gamma"/>
    <property type="match status" value="1"/>
</dbReference>
<dbReference type="NCBIfam" id="NF004146">
    <property type="entry name" value="PRK05621.1-4"/>
    <property type="match status" value="1"/>
</dbReference>
<dbReference type="PANTHER" id="PTHR11693">
    <property type="entry name" value="ATP SYNTHASE GAMMA CHAIN"/>
    <property type="match status" value="1"/>
</dbReference>
<dbReference type="PANTHER" id="PTHR11693:SF22">
    <property type="entry name" value="ATP SYNTHASE SUBUNIT GAMMA, MITOCHONDRIAL"/>
    <property type="match status" value="1"/>
</dbReference>
<dbReference type="Pfam" id="PF00231">
    <property type="entry name" value="ATP-synt"/>
    <property type="match status" value="1"/>
</dbReference>
<dbReference type="PIRSF" id="PIRSF039089">
    <property type="entry name" value="ATP_synthase_gamma"/>
    <property type="match status" value="1"/>
</dbReference>
<dbReference type="PRINTS" id="PR00126">
    <property type="entry name" value="ATPASEGAMMA"/>
</dbReference>
<dbReference type="SUPFAM" id="SSF52943">
    <property type="entry name" value="ATP synthase (F1-ATPase), gamma subunit"/>
    <property type="match status" value="1"/>
</dbReference>
<dbReference type="PROSITE" id="PS00153">
    <property type="entry name" value="ATPASE_GAMMA"/>
    <property type="match status" value="1"/>
</dbReference>
<organism>
    <name type="scientific">Bartonella henselae (strain ATCC 49882 / DSM 28221 / CCUG 30454 / Houston 1)</name>
    <name type="common">Rochalimaea henselae</name>
    <dbReference type="NCBI Taxonomy" id="283166"/>
    <lineage>
        <taxon>Bacteria</taxon>
        <taxon>Pseudomonadati</taxon>
        <taxon>Pseudomonadota</taxon>
        <taxon>Alphaproteobacteria</taxon>
        <taxon>Hyphomicrobiales</taxon>
        <taxon>Bartonellaceae</taxon>
        <taxon>Bartonella</taxon>
    </lineage>
</organism>
<comment type="function">
    <text evidence="1">Produces ATP from ADP in the presence of a proton gradient across the membrane. The gamma chain is believed to be important in regulating ATPase activity and the flow of protons through the CF(0) complex.</text>
</comment>
<comment type="subunit">
    <text evidence="1">F-type ATPases have 2 components, CF(1) - the catalytic core - and CF(0) - the membrane proton channel. CF(1) has five subunits: alpha(3), beta(3), gamma(1), delta(1), epsilon(1). CF(0) has three main subunits: a, b and c.</text>
</comment>
<comment type="subcellular location">
    <subcellularLocation>
        <location evidence="1">Cell inner membrane</location>
        <topology evidence="1">Peripheral membrane protein</topology>
    </subcellularLocation>
</comment>
<comment type="similarity">
    <text evidence="1">Belongs to the ATPase gamma chain family.</text>
</comment>
<accession>Q6G1W8</accession>
<sequence length="303" mass="32955">MASLKDLRDRIASVKATQKITKAMQMVAAARLHRAQEAAHSARPYAKRMAAILANLANDVDPIDAPSLMRGTGRDDVHLLVVCTAERGLCGAFNVQIARRAREHIKTLLAAGKIVKVLTVGKKGADILSRDYKALMIDHIDLQSIKRVGFAEAAMISQKIVDLFDDDAFDVCTLFYSEFVSVINQRPVAFGLVPMVSSGGAVETAEVEQKIDNSADLQSIVYDYEPDAASLLDVLVPRNLSVQIFRALLENVAGEMGAKMTAMDNASRNAGEMINKLTVAYNRQRQAQITTELIEIIAGAEAL</sequence>
<evidence type="ECO:0000255" key="1">
    <source>
        <dbReference type="HAMAP-Rule" id="MF_00815"/>
    </source>
</evidence>
<proteinExistence type="inferred from homology"/>
<feature type="chain" id="PRO_0000073239" description="ATP synthase gamma chain">
    <location>
        <begin position="1"/>
        <end position="303"/>
    </location>
</feature>
<gene>
    <name evidence="1" type="primary">atpG</name>
    <name type="ordered locus">BH15330</name>
</gene>